<comment type="function">
    <text evidence="1 2">Required for the formation of a threonylcarbamoyl group on adenosine at position 37 (t(6)A37) in tRNAs that read codons beginning with adenine. Is involved in the transfer of the threonylcarbamoyl moiety of threonylcarbamoyl-AMP (TC-AMP) to the N6 group of A37, together with TsaD and TsaB. TsaE seems to play an indirect role in the t(6)A biosynthesis pathway, possibly in regulating the core enzymatic function of TsaD (By similarity). Displays ATPase activity in vitro.</text>
</comment>
<comment type="biophysicochemical properties">
    <kinetics>
        <KM evidence="2">38 uM for ATP</KM>
        <text>kcat is 0.42 min(-1) for ATP hydrolysis.</text>
    </kinetics>
</comment>
<comment type="subcellular location">
    <subcellularLocation>
        <location evidence="1">Cytoplasm</location>
    </subcellularLocation>
</comment>
<comment type="similarity">
    <text evidence="3">Belongs to the TsaE family.</text>
</comment>
<organism>
    <name type="scientific">Haemophilus influenzae (strain ATCC 51907 / DSM 11121 / KW20 / Rd)</name>
    <dbReference type="NCBI Taxonomy" id="71421"/>
    <lineage>
        <taxon>Bacteria</taxon>
        <taxon>Pseudomonadati</taxon>
        <taxon>Pseudomonadota</taxon>
        <taxon>Gammaproteobacteria</taxon>
        <taxon>Pasteurellales</taxon>
        <taxon>Pasteurellaceae</taxon>
        <taxon>Haemophilus</taxon>
    </lineage>
</organism>
<feature type="chain" id="PRO_0000096208" description="tRNA threonylcarbamoyladenosine biosynthesis protein TsaE">
    <location>
        <begin position="1"/>
        <end position="158"/>
    </location>
</feature>
<feature type="binding site">
    <location>
        <position position="11"/>
    </location>
    <ligand>
        <name>ATP</name>
        <dbReference type="ChEBI" id="CHEBI:30616"/>
    </ligand>
</feature>
<feature type="binding site">
    <location>
        <begin position="43"/>
        <end position="48"/>
    </location>
    <ligand>
        <name>ATP</name>
        <dbReference type="ChEBI" id="CHEBI:30616"/>
    </ligand>
</feature>
<feature type="binding site">
    <location>
        <position position="47"/>
    </location>
    <ligand>
        <name>Mg(2+)</name>
        <dbReference type="ChEBI" id="CHEBI:18420"/>
    </ligand>
</feature>
<feature type="binding site">
    <location>
        <position position="113"/>
    </location>
    <ligand>
        <name>Mg(2+)</name>
        <dbReference type="ChEBI" id="CHEBI:18420"/>
    </ligand>
</feature>
<feature type="binding site">
    <location>
        <position position="136"/>
    </location>
    <ligand>
        <name>ATP</name>
        <dbReference type="ChEBI" id="CHEBI:30616"/>
    </ligand>
</feature>
<feature type="strand" evidence="4">
    <location>
        <begin position="3"/>
        <end position="8"/>
    </location>
</feature>
<feature type="helix" evidence="4">
    <location>
        <begin position="11"/>
        <end position="28"/>
    </location>
</feature>
<feature type="strand" evidence="4">
    <location>
        <begin position="34"/>
        <end position="39"/>
    </location>
</feature>
<feature type="helix" evidence="4">
    <location>
        <begin position="46"/>
        <end position="56"/>
    </location>
</feature>
<feature type="turn" evidence="4">
    <location>
        <begin position="67"/>
        <end position="69"/>
    </location>
</feature>
<feature type="strand" evidence="4">
    <location>
        <begin position="71"/>
        <end position="76"/>
    </location>
</feature>
<feature type="strand" evidence="4">
    <location>
        <begin position="79"/>
        <end position="85"/>
    </location>
</feature>
<feature type="helix" evidence="4">
    <location>
        <begin position="94"/>
        <end position="97"/>
    </location>
</feature>
<feature type="helix" evidence="4">
    <location>
        <begin position="100"/>
        <end position="104"/>
    </location>
</feature>
<feature type="strand" evidence="4">
    <location>
        <begin position="105"/>
        <end position="107"/>
    </location>
</feature>
<feature type="strand" evidence="4">
    <location>
        <begin position="109"/>
        <end position="114"/>
    </location>
</feature>
<feature type="helix" evidence="4">
    <location>
        <begin position="115"/>
        <end position="118"/>
    </location>
</feature>
<feature type="turn" evidence="4">
    <location>
        <begin position="119"/>
        <end position="121"/>
    </location>
</feature>
<feature type="strand" evidence="4">
    <location>
        <begin position="126"/>
        <end position="134"/>
    </location>
</feature>
<feature type="strand" evidence="4">
    <location>
        <begin position="137"/>
        <end position="144"/>
    </location>
</feature>
<feature type="helix" evidence="4">
    <location>
        <begin position="147"/>
        <end position="155"/>
    </location>
</feature>
<dbReference type="EMBL" id="L42023">
    <property type="protein sequence ID" value="AAC21743.1"/>
    <property type="molecule type" value="Genomic_DNA"/>
</dbReference>
<dbReference type="PIR" id="H64141">
    <property type="entry name" value="H64141"/>
</dbReference>
<dbReference type="RefSeq" id="NP_438238.1">
    <property type="nucleotide sequence ID" value="NC_000907.1"/>
</dbReference>
<dbReference type="PDB" id="1FL9">
    <property type="method" value="X-ray"/>
    <property type="resolution" value="2.50 A"/>
    <property type="chains" value="A/B/C=1-158"/>
</dbReference>
<dbReference type="PDB" id="1HTW">
    <property type="method" value="X-ray"/>
    <property type="resolution" value="1.70 A"/>
    <property type="chains" value="A/B/C=1-158"/>
</dbReference>
<dbReference type="PDBsum" id="1FL9"/>
<dbReference type="PDBsum" id="1HTW"/>
<dbReference type="SMR" id="P44492"/>
<dbReference type="STRING" id="71421.HI_0065"/>
<dbReference type="EnsemblBacteria" id="AAC21743">
    <property type="protein sequence ID" value="AAC21743"/>
    <property type="gene ID" value="HI_0065"/>
</dbReference>
<dbReference type="KEGG" id="hin:HI_0065"/>
<dbReference type="PATRIC" id="fig|71421.8.peg.66"/>
<dbReference type="eggNOG" id="COG0802">
    <property type="taxonomic scope" value="Bacteria"/>
</dbReference>
<dbReference type="HOGENOM" id="CLU_087829_2_2_6"/>
<dbReference type="OrthoDB" id="9800307at2"/>
<dbReference type="PhylomeDB" id="P44492"/>
<dbReference type="BioCyc" id="HINF71421:G1GJ1-66-MONOMER"/>
<dbReference type="EvolutionaryTrace" id="P44492"/>
<dbReference type="Proteomes" id="UP000000579">
    <property type="component" value="Chromosome"/>
</dbReference>
<dbReference type="GO" id="GO:0005737">
    <property type="term" value="C:cytoplasm"/>
    <property type="evidence" value="ECO:0007669"/>
    <property type="project" value="UniProtKB-SubCell"/>
</dbReference>
<dbReference type="GO" id="GO:0005524">
    <property type="term" value="F:ATP binding"/>
    <property type="evidence" value="ECO:0007669"/>
    <property type="project" value="UniProtKB-KW"/>
</dbReference>
<dbReference type="GO" id="GO:0046872">
    <property type="term" value="F:metal ion binding"/>
    <property type="evidence" value="ECO:0007669"/>
    <property type="project" value="UniProtKB-KW"/>
</dbReference>
<dbReference type="GO" id="GO:0002949">
    <property type="term" value="P:tRNA threonylcarbamoyladenosine modification"/>
    <property type="evidence" value="ECO:0000318"/>
    <property type="project" value="GO_Central"/>
</dbReference>
<dbReference type="FunFam" id="3.40.50.300:FF:000406">
    <property type="entry name" value="tRNA (N6-adenosine(37)-N6)-threonylcarbamoyltransferase complex ATPase TsaE"/>
    <property type="match status" value="1"/>
</dbReference>
<dbReference type="Gene3D" id="3.40.50.300">
    <property type="entry name" value="P-loop containing nucleotide triphosphate hydrolases"/>
    <property type="match status" value="1"/>
</dbReference>
<dbReference type="InterPro" id="IPR027417">
    <property type="entry name" value="P-loop_NTPase"/>
</dbReference>
<dbReference type="InterPro" id="IPR003442">
    <property type="entry name" value="T6A_TsaE"/>
</dbReference>
<dbReference type="NCBIfam" id="TIGR00150">
    <property type="entry name" value="T6A_YjeE"/>
    <property type="match status" value="1"/>
</dbReference>
<dbReference type="PANTHER" id="PTHR33540">
    <property type="entry name" value="TRNA THREONYLCARBAMOYLADENOSINE BIOSYNTHESIS PROTEIN TSAE"/>
    <property type="match status" value="1"/>
</dbReference>
<dbReference type="PANTHER" id="PTHR33540:SF2">
    <property type="entry name" value="TRNA THREONYLCARBAMOYLADENOSINE BIOSYNTHESIS PROTEIN TSAE"/>
    <property type="match status" value="1"/>
</dbReference>
<dbReference type="Pfam" id="PF02367">
    <property type="entry name" value="TsaE"/>
    <property type="match status" value="1"/>
</dbReference>
<dbReference type="SUPFAM" id="SSF52540">
    <property type="entry name" value="P-loop containing nucleoside triphosphate hydrolases"/>
    <property type="match status" value="1"/>
</dbReference>
<gene>
    <name type="primary">tsaE</name>
    <name type="synonym">yjeE</name>
    <name type="ordered locus">HI_0065</name>
</gene>
<accession>P44492</accession>
<sequence length="158" mass="17970">MESLTQYIPDEFSMLRFGKKFAEILLKLHTEKAIMVYLNGDLGAGKTTLTRGMLQGIGHQGNVKSPTYTLVEEYNIAGKMIYHFDLYRLADPEELEFMGIRDYFNTDSICLIEWSEKGQGILPEADILVNIDYYDDARNIELIAQTNLGKNIISAFSN</sequence>
<proteinExistence type="evidence at protein level"/>
<evidence type="ECO:0000250" key="1"/>
<evidence type="ECO:0000269" key="2">
    <source>
    </source>
</evidence>
<evidence type="ECO:0000305" key="3"/>
<evidence type="ECO:0007829" key="4">
    <source>
        <dbReference type="PDB" id="1HTW"/>
    </source>
</evidence>
<name>TSAE_HAEIN</name>
<keyword id="KW-0002">3D-structure</keyword>
<keyword id="KW-0067">ATP-binding</keyword>
<keyword id="KW-0963">Cytoplasm</keyword>
<keyword id="KW-0460">Magnesium</keyword>
<keyword id="KW-0479">Metal-binding</keyword>
<keyword id="KW-0547">Nucleotide-binding</keyword>
<keyword id="KW-1185">Reference proteome</keyword>
<keyword id="KW-0819">tRNA processing</keyword>
<protein>
    <recommendedName>
        <fullName>tRNA threonylcarbamoyladenosine biosynthesis protein TsaE</fullName>
    </recommendedName>
    <alternativeName>
        <fullName>t(6)A37 threonylcarbamoyladenosine biosynthesis protein TsaE</fullName>
    </alternativeName>
</protein>
<reference key="1">
    <citation type="journal article" date="1995" name="Science">
        <title>Whole-genome random sequencing and assembly of Haemophilus influenzae Rd.</title>
        <authorList>
            <person name="Fleischmann R.D."/>
            <person name="Adams M.D."/>
            <person name="White O."/>
            <person name="Clayton R.A."/>
            <person name="Kirkness E.F."/>
            <person name="Kerlavage A.R."/>
            <person name="Bult C.J."/>
            <person name="Tomb J.-F."/>
            <person name="Dougherty B.A."/>
            <person name="Merrick J.M."/>
            <person name="McKenney K."/>
            <person name="Sutton G.G."/>
            <person name="FitzHugh W."/>
            <person name="Fields C.A."/>
            <person name="Gocayne J.D."/>
            <person name="Scott J.D."/>
            <person name="Shirley R."/>
            <person name="Liu L.-I."/>
            <person name="Glodek A."/>
            <person name="Kelley J.M."/>
            <person name="Weidman J.F."/>
            <person name="Phillips C.A."/>
            <person name="Spriggs T."/>
            <person name="Hedblom E."/>
            <person name="Cotton M.D."/>
            <person name="Utterback T.R."/>
            <person name="Hanna M.C."/>
            <person name="Nguyen D.T."/>
            <person name="Saudek D.M."/>
            <person name="Brandon R.C."/>
            <person name="Fine L.D."/>
            <person name="Fritchman J.L."/>
            <person name="Fuhrmann J.L."/>
            <person name="Geoghagen N.S.M."/>
            <person name="Gnehm C.L."/>
            <person name="McDonald L.A."/>
            <person name="Small K.V."/>
            <person name="Fraser C.M."/>
            <person name="Smith H.O."/>
            <person name="Venter J.C."/>
        </authorList>
    </citation>
    <scope>NUCLEOTIDE SEQUENCE [LARGE SCALE GENOMIC DNA]</scope>
    <source>
        <strain>ATCC 51907 / DSM 11121 / KW20 / Rd</strain>
    </source>
</reference>
<reference key="2">
    <citation type="journal article" date="2000" name="Electrophoresis">
        <title>Two-dimensional map of the proteome of Haemophilus influenzae.</title>
        <authorList>
            <person name="Langen H."/>
            <person name="Takacs B."/>
            <person name="Evers S."/>
            <person name="Berndt P."/>
            <person name="Lahm H.W."/>
            <person name="Wipf B."/>
            <person name="Gray C."/>
            <person name="Fountoulakis M."/>
        </authorList>
    </citation>
    <scope>IDENTIFICATION BY MASS SPECTROMETRY</scope>
    <source>
        <strain>ATCC 51907 / DSM 11121 / KW20 / Rd</strain>
    </source>
</reference>
<reference key="3">
    <citation type="journal article" date="2002" name="Proteins">
        <title>Crystal structure of the YjeE protein from Haemophilus influenzae: a putative Atpase involved in cell wall synthesis.</title>
        <authorList>
            <person name="Teplyakov A."/>
            <person name="Obmolova G."/>
            <person name="Tordova M."/>
            <person name="Thanki N."/>
            <person name="Bonander N."/>
            <person name="Eisenstein E."/>
            <person name="Howard A.J."/>
            <person name="Gilliland G.L."/>
        </authorList>
    </citation>
    <scope>X-RAY CRYSTALLOGRAPHY (1.70 ANGSTROMS) OF APOPROEIN AND IN COMPLEX WITH MG-ADP</scope>
    <scope>FUNCTION</scope>
    <scope>ATPASE ACTIVITY</scope>
    <scope>KINETIC PARAMETERS</scope>
    <source>
        <strain>ATCC 51907 / DSM 11121 / KW20 / Rd</strain>
    </source>
</reference>